<feature type="chain" id="PRO_1000100700" description="Cytidylate kinase">
    <location>
        <begin position="1"/>
        <end position="226"/>
    </location>
</feature>
<feature type="binding site" evidence="1">
    <location>
        <begin position="12"/>
        <end position="20"/>
    </location>
    <ligand>
        <name>ATP</name>
        <dbReference type="ChEBI" id="CHEBI:30616"/>
    </ligand>
</feature>
<dbReference type="EC" id="2.7.4.25" evidence="1"/>
<dbReference type="EMBL" id="AM920689">
    <property type="protein sequence ID" value="CAP51338.1"/>
    <property type="molecule type" value="Genomic_DNA"/>
</dbReference>
<dbReference type="SMR" id="B0RSA3"/>
<dbReference type="KEGG" id="xca:xcc-b100_1985"/>
<dbReference type="HOGENOM" id="CLU_079959_2_0_6"/>
<dbReference type="Proteomes" id="UP000001188">
    <property type="component" value="Chromosome"/>
</dbReference>
<dbReference type="GO" id="GO:0005737">
    <property type="term" value="C:cytoplasm"/>
    <property type="evidence" value="ECO:0007669"/>
    <property type="project" value="UniProtKB-SubCell"/>
</dbReference>
<dbReference type="GO" id="GO:0005524">
    <property type="term" value="F:ATP binding"/>
    <property type="evidence" value="ECO:0007669"/>
    <property type="project" value="UniProtKB-UniRule"/>
</dbReference>
<dbReference type="GO" id="GO:0036430">
    <property type="term" value="F:CMP kinase activity"/>
    <property type="evidence" value="ECO:0007669"/>
    <property type="project" value="RHEA"/>
</dbReference>
<dbReference type="GO" id="GO:0036431">
    <property type="term" value="F:dCMP kinase activity"/>
    <property type="evidence" value="ECO:0007669"/>
    <property type="project" value="RHEA"/>
</dbReference>
<dbReference type="GO" id="GO:0006220">
    <property type="term" value="P:pyrimidine nucleotide metabolic process"/>
    <property type="evidence" value="ECO:0007669"/>
    <property type="project" value="UniProtKB-UniRule"/>
</dbReference>
<dbReference type="CDD" id="cd02020">
    <property type="entry name" value="CMPK"/>
    <property type="match status" value="1"/>
</dbReference>
<dbReference type="FunFam" id="3.40.50.300:FF:000262">
    <property type="entry name" value="Cytidylate kinase"/>
    <property type="match status" value="1"/>
</dbReference>
<dbReference type="Gene3D" id="3.40.50.300">
    <property type="entry name" value="P-loop containing nucleotide triphosphate hydrolases"/>
    <property type="match status" value="1"/>
</dbReference>
<dbReference type="HAMAP" id="MF_00238">
    <property type="entry name" value="Cytidyl_kinase_type1"/>
    <property type="match status" value="1"/>
</dbReference>
<dbReference type="InterPro" id="IPR003136">
    <property type="entry name" value="Cytidylate_kin"/>
</dbReference>
<dbReference type="InterPro" id="IPR011994">
    <property type="entry name" value="Cytidylate_kinase_dom"/>
</dbReference>
<dbReference type="InterPro" id="IPR027417">
    <property type="entry name" value="P-loop_NTPase"/>
</dbReference>
<dbReference type="NCBIfam" id="TIGR00017">
    <property type="entry name" value="cmk"/>
    <property type="match status" value="1"/>
</dbReference>
<dbReference type="Pfam" id="PF02224">
    <property type="entry name" value="Cytidylate_kin"/>
    <property type="match status" value="1"/>
</dbReference>
<dbReference type="SUPFAM" id="SSF52540">
    <property type="entry name" value="P-loop containing nucleoside triphosphate hydrolases"/>
    <property type="match status" value="1"/>
</dbReference>
<organism>
    <name type="scientific">Xanthomonas campestris pv. campestris (strain B100)</name>
    <dbReference type="NCBI Taxonomy" id="509169"/>
    <lineage>
        <taxon>Bacteria</taxon>
        <taxon>Pseudomonadati</taxon>
        <taxon>Pseudomonadota</taxon>
        <taxon>Gammaproteobacteria</taxon>
        <taxon>Lysobacterales</taxon>
        <taxon>Lysobacteraceae</taxon>
        <taxon>Xanthomonas</taxon>
    </lineage>
</organism>
<reference key="1">
    <citation type="journal article" date="2008" name="J. Biotechnol.">
        <title>The genome of Xanthomonas campestris pv. campestris B100 and its use for the reconstruction of metabolic pathways involved in xanthan biosynthesis.</title>
        <authorList>
            <person name="Vorhoelter F.-J."/>
            <person name="Schneiker S."/>
            <person name="Goesmann A."/>
            <person name="Krause L."/>
            <person name="Bekel T."/>
            <person name="Kaiser O."/>
            <person name="Linke B."/>
            <person name="Patschkowski T."/>
            <person name="Rueckert C."/>
            <person name="Schmid J."/>
            <person name="Sidhu V.K."/>
            <person name="Sieber V."/>
            <person name="Tauch A."/>
            <person name="Watt S.A."/>
            <person name="Weisshaar B."/>
            <person name="Becker A."/>
            <person name="Niehaus K."/>
            <person name="Puehler A."/>
        </authorList>
    </citation>
    <scope>NUCLEOTIDE SEQUENCE [LARGE SCALE GENOMIC DNA]</scope>
    <source>
        <strain>B100</strain>
    </source>
</reference>
<gene>
    <name evidence="1" type="primary">cmk</name>
    <name type="ordered locus">xcc-b100_1985</name>
</gene>
<proteinExistence type="inferred from homology"/>
<name>KCY_XANCB</name>
<sequence>MTDLSPVLTIDGPSGAGKGTVSRIVAARLGWHYLDSGALYRAVGVAASWADLDVSDPAALVRCTFDTKVEFDEAGEAGLRVLVNGVDATGELRLETTGALASAIAAIPEVRSALKERQRAFRQPPGLVADGRDMGTVIFPDAAFKVFLTASAEERAGRRHKQLMEKGVSVIFDDLLREIMARDARDAQRVVAPLRPAEDAVLIDTSGIGIEDVVQRVVGLLDSRTP</sequence>
<comment type="catalytic activity">
    <reaction evidence="1">
        <text>CMP + ATP = CDP + ADP</text>
        <dbReference type="Rhea" id="RHEA:11600"/>
        <dbReference type="ChEBI" id="CHEBI:30616"/>
        <dbReference type="ChEBI" id="CHEBI:58069"/>
        <dbReference type="ChEBI" id="CHEBI:60377"/>
        <dbReference type="ChEBI" id="CHEBI:456216"/>
        <dbReference type="EC" id="2.7.4.25"/>
    </reaction>
</comment>
<comment type="catalytic activity">
    <reaction evidence="1">
        <text>dCMP + ATP = dCDP + ADP</text>
        <dbReference type="Rhea" id="RHEA:25094"/>
        <dbReference type="ChEBI" id="CHEBI:30616"/>
        <dbReference type="ChEBI" id="CHEBI:57566"/>
        <dbReference type="ChEBI" id="CHEBI:58593"/>
        <dbReference type="ChEBI" id="CHEBI:456216"/>
        <dbReference type="EC" id="2.7.4.25"/>
    </reaction>
</comment>
<comment type="subcellular location">
    <subcellularLocation>
        <location evidence="1">Cytoplasm</location>
    </subcellularLocation>
</comment>
<comment type="similarity">
    <text evidence="1">Belongs to the cytidylate kinase family. Type 1 subfamily.</text>
</comment>
<keyword id="KW-0067">ATP-binding</keyword>
<keyword id="KW-0963">Cytoplasm</keyword>
<keyword id="KW-0418">Kinase</keyword>
<keyword id="KW-0547">Nucleotide-binding</keyword>
<keyword id="KW-0808">Transferase</keyword>
<protein>
    <recommendedName>
        <fullName evidence="1">Cytidylate kinase</fullName>
        <shortName evidence="1">CK</shortName>
        <ecNumber evidence="1">2.7.4.25</ecNumber>
    </recommendedName>
    <alternativeName>
        <fullName evidence="1">Cytidine monophosphate kinase</fullName>
        <shortName evidence="1">CMP kinase</shortName>
    </alternativeName>
</protein>
<evidence type="ECO:0000255" key="1">
    <source>
        <dbReference type="HAMAP-Rule" id="MF_00238"/>
    </source>
</evidence>
<accession>B0RSA3</accession>